<evidence type="ECO:0000255" key="1"/>
<evidence type="ECO:0000269" key="2">
    <source>
    </source>
</evidence>
<evidence type="ECO:0000269" key="3">
    <source>
    </source>
</evidence>
<evidence type="ECO:0000269" key="4">
    <source>
    </source>
</evidence>
<evidence type="ECO:0000269" key="5">
    <source>
    </source>
</evidence>
<evidence type="ECO:0000269" key="6">
    <source>
    </source>
</evidence>
<evidence type="ECO:0000303" key="7">
    <source>
    </source>
</evidence>
<evidence type="ECO:0000303" key="8">
    <source>
    </source>
</evidence>
<evidence type="ECO:0000305" key="9"/>
<evidence type="ECO:0000305" key="10">
    <source>
    </source>
</evidence>
<comment type="function">
    <text evidence="10">Component of the type III secretion system 2 (SPI-2 T3SS), also called injectisome, which is used to inject bacterial effector proteins into eukaryotic host cells (Probable). SseC/SctE2 and SseD/SctB2 are inserted into the host membrane where they form a pore and allow the translocation of effector proteins into the cytosol of target cells (Probable).</text>
</comment>
<comment type="function">
    <text evidence="2 3 4">Required for the translocation of SPI-2 effector proteins (PubMed:11567004). Required for systemic Salmonella infection of the mouse (PubMed:11159962). Essential for SpvB-induced actin depolymerization in the host cell cytoplasm (PubMed:18248436).</text>
</comment>
<comment type="subunit">
    <text evidence="3 5 10">The core secretion machinery of the T3SS is composed of approximately 20 different proteins, including cytoplasmic components, a base, an export apparatus and a needle (PubMed:30107569). This subunit is involved in the formation of a pore, called the translocon, in host membrane (Probable). May form a complex with SseB and SseD/SctB2 (PubMed:11567004). SseB is required for correct localization of SseC/SctE2 on the bacterial cell surface (PubMed:11567004).</text>
</comment>
<comment type="subcellular location">
    <subcellularLocation>
        <location evidence="2 3">Secreted</location>
    </subcellularLocation>
    <subcellularLocation>
        <location evidence="2 3">Cell surface</location>
    </subcellularLocation>
    <subcellularLocation>
        <location evidence="9">Host membrane</location>
        <topology evidence="1">Multi-pass membrane protein</topology>
    </subcellularLocation>
    <text evidence="2 3">Secreted via the type III secretion system 2 (SPI-2 T3SS) (PubMed:11159962, PubMed:11567004). After secretion, localizes mainly on the surface of the bacterial cell (PubMed:11159962, PubMed:11567004).</text>
</comment>
<comment type="disruption phenotype">
    <text evidence="4 6">Mutant is severely attenuated in virulence (PubMed:9786193). Disruption prevents SpvB-induced F-actin depolymerization in human macrophages without affecting intra-bacterial SpvB protein levels (PubMed:18248436).</text>
</comment>
<comment type="similarity">
    <text evidence="9">Belongs to the SctE/SipB/YopB family.</text>
</comment>
<proteinExistence type="evidence at protein level"/>
<organism>
    <name type="scientific">Salmonella typhimurium (strain LT2 / SGSC1412 / ATCC 700720)</name>
    <dbReference type="NCBI Taxonomy" id="99287"/>
    <lineage>
        <taxon>Bacteria</taxon>
        <taxon>Pseudomonadati</taxon>
        <taxon>Pseudomonadota</taxon>
        <taxon>Gammaproteobacteria</taxon>
        <taxon>Enterobacterales</taxon>
        <taxon>Enterobacteriaceae</taxon>
        <taxon>Salmonella</taxon>
    </lineage>
</organism>
<gene>
    <name evidence="7" type="primary">sctE2</name>
    <name evidence="8" type="synonym">sseC</name>
    <name type="ordered locus">STM1400</name>
</gene>
<name>SCTE2_SALTY</name>
<protein>
    <recommendedName>
        <fullName evidence="9">SPI-2 type 3 secretion system translocon protein SctE</fullName>
        <shortName evidence="9">SPI-2 T3SS translocon protein SctE</shortName>
    </recommendedName>
    <alternativeName>
        <fullName>Secreted effector protein SseC</fullName>
    </alternativeName>
    <alternativeName>
        <fullName>Secretion system effector C</fullName>
    </alternativeName>
</protein>
<feature type="chain" id="PRO_0000391716" description="SPI-2 type 3 secretion system translocon protein SctE">
    <location>
        <begin position="1"/>
        <end position="484"/>
    </location>
</feature>
<feature type="transmembrane region" description="Helical" evidence="1">
    <location>
        <begin position="85"/>
        <end position="105"/>
    </location>
</feature>
<feature type="transmembrane region" description="Helical" evidence="1">
    <location>
        <begin position="152"/>
        <end position="172"/>
    </location>
</feature>
<feature type="coiled-coil region" evidence="1">
    <location>
        <begin position="107"/>
        <end position="152"/>
    </location>
</feature>
<feature type="coiled-coil region" evidence="1">
    <location>
        <begin position="413"/>
        <end position="457"/>
    </location>
</feature>
<feature type="sequence conflict" description="In Ref. 1; CAA12187." evidence="9" ref="1">
    <original>S</original>
    <variation>T</variation>
    <location>
        <position position="458"/>
    </location>
</feature>
<accession>O84947</accession>
<accession>Q2I3D0</accession>
<accession>Q7CQL9</accession>
<accession>Q9R804</accession>
<reference key="1">
    <citation type="journal article" date="1998" name="Mol. Microbiol.">
        <title>Genes encoding putative effector proteins of the type III secretion system of Salmonella pathogenicity island 2 are required for bacterial virulence and proliferation in macrophages.</title>
        <authorList>
            <person name="Hensel M."/>
            <person name="Shea J.E."/>
            <person name="Waterman S.R."/>
            <person name="Mundy R."/>
            <person name="Nikolaus T."/>
            <person name="Banks G."/>
            <person name="Vazquez-Torres A."/>
            <person name="Gleeson C."/>
            <person name="Fang F.C."/>
            <person name="Holden D.W."/>
        </authorList>
    </citation>
    <scope>NUCLEOTIDE SEQUENCE [GENOMIC DNA]</scope>
    <scope>DISRUPTION PHENOTYPE</scope>
    <source>
        <strain>ATCC 14028 / SGSC 2980 / CDC 6516-60 / NCTC 12023</strain>
    </source>
</reference>
<reference key="2">
    <citation type="journal article" date="1998" name="Mol. Microbiol.">
        <title>Macrophage-dependent induction of the Salmonella pathogenicity island 2 type III secretion system and its role in intracellular survival.</title>
        <authorList>
            <person name="Cirillo D.M."/>
            <person name="Valdivia R.H."/>
            <person name="Monack D.M."/>
            <person name="Falkow S."/>
        </authorList>
    </citation>
    <scope>NUCLEOTIDE SEQUENCE [GENOMIC DNA]</scope>
    <source>
        <strain>SL1344</strain>
    </source>
</reference>
<reference key="3">
    <citation type="journal article" date="2001" name="Nature">
        <title>Complete genome sequence of Salmonella enterica serovar Typhimurium LT2.</title>
        <authorList>
            <person name="McClelland M."/>
            <person name="Sanderson K.E."/>
            <person name="Spieth J."/>
            <person name="Clifton S.W."/>
            <person name="Latreille P."/>
            <person name="Courtney L."/>
            <person name="Porwollik S."/>
            <person name="Ali J."/>
            <person name="Dante M."/>
            <person name="Du F."/>
            <person name="Hou S."/>
            <person name="Layman D."/>
            <person name="Leonard S."/>
            <person name="Nguyen C."/>
            <person name="Scott K."/>
            <person name="Holmes A."/>
            <person name="Grewal N."/>
            <person name="Mulvaney E."/>
            <person name="Ryan E."/>
            <person name="Sun H."/>
            <person name="Florea L."/>
            <person name="Miller W."/>
            <person name="Stoneking T."/>
            <person name="Nhan M."/>
            <person name="Waterston R."/>
            <person name="Wilson R.K."/>
        </authorList>
    </citation>
    <scope>NUCLEOTIDE SEQUENCE [LARGE SCALE GENOMIC DNA]</scope>
    <source>
        <strain>LT2 / SGSC1412 / ATCC 700720</strain>
    </source>
</reference>
<reference key="4">
    <citation type="journal article" date="2006" name="J. Clin. Microbiol.">
        <title>Genetic determinants and polymorphisms specific for human-adapted serovars of Salmonella enterica that cause enteric fever.</title>
        <authorList>
            <person name="Tracz D.M."/>
            <person name="Tabor H."/>
            <person name="Jerome M."/>
            <person name="Ng L.K."/>
            <person name="Gilmour M.W."/>
        </authorList>
    </citation>
    <scope>NUCLEOTIDE SEQUENCE [GENOMIC DNA] OF 295-383</scope>
    <source>
        <strain>S1605</strain>
    </source>
</reference>
<reference key="5">
    <citation type="journal article" date="2001" name="Infect. Immun.">
        <title>Salmonella pathogenicity island 2-encoded proteins SseC and SseD are essential for virulence and are substrates of the type III secretion system.</title>
        <authorList>
            <person name="Klein J.R."/>
            <person name="Jones B.D."/>
        </authorList>
    </citation>
    <scope>FUNCTION IN VIRULENCE</scope>
    <scope>SUBCELLULAR LOCATION</scope>
    <scope>SECRETION VIA TYPE III SECRETION SYSTEM</scope>
    <source>
        <strain>SL1344</strain>
    </source>
</reference>
<reference key="6">
    <citation type="journal article" date="2001" name="J. Bacteriol.">
        <title>SseBCD proteins are secreted by the type III secretion system of Salmonella pathogenicity island 2 and function as a translocon.</title>
        <authorList>
            <person name="Nikolaus T."/>
            <person name="Deiwick J."/>
            <person name="Rappl C."/>
            <person name="Freeman J.A."/>
            <person name="Schroder W."/>
            <person name="Miller S.I."/>
            <person name="Hensel M."/>
        </authorList>
    </citation>
    <scope>FUNCTION</scope>
    <scope>SUBUNIT</scope>
    <scope>SUBCELLULAR LOCATION</scope>
    <scope>SECRETION VIA TYPE III SECRETION SYSTEM</scope>
    <source>
        <strain>ATCC 14028 / SGSC 2980 / CDC 6516-60 / NCTC 12023</strain>
    </source>
</reference>
<reference key="7">
    <citation type="journal article" date="2008" name="FEMS Immunol. Med. Microbiol.">
        <title>Identification of Salmonella SPI-2 secretion system components required for SpvB-mediated cytotoxicity in macrophages and virulence in mice.</title>
        <authorList>
            <person name="Browne S.H."/>
            <person name="Hasegawa P."/>
            <person name="Okamoto S."/>
            <person name="Fierer J."/>
            <person name="Guiney D.G."/>
        </authorList>
    </citation>
    <scope>ROLE IN SPVB EXPORT</scope>
    <scope>DISRUPTION PHENOTYPE</scope>
    <source>
        <strain>LT2 / SGSC1412 / ATCC 700720</strain>
    </source>
</reference>
<reference key="8">
    <citation type="journal article" date="2018" name="FEMS Microbiol. Lett.">
        <title>Bacterial type III secretion systems: a complex device for the delivery of bacterial effector proteins into eukaryotic host cells.</title>
        <authorList>
            <person name="Wagner S."/>
            <person name="Grin I."/>
            <person name="Malmsheimer S."/>
            <person name="Singh N."/>
            <person name="Torres-Vargas C.E."/>
            <person name="Westerhausen S."/>
        </authorList>
    </citation>
    <scope>REVIEW</scope>
    <scope>NOMENCLATURE</scope>
    <scope>SUBUNIT</scope>
</reference>
<keyword id="KW-0175">Coiled coil</keyword>
<keyword id="KW-1043">Host membrane</keyword>
<keyword id="KW-0472">Membrane</keyword>
<keyword id="KW-1185">Reference proteome</keyword>
<keyword id="KW-0964">Secreted</keyword>
<keyword id="KW-0812">Transmembrane</keyword>
<keyword id="KW-1133">Transmembrane helix</keyword>
<keyword id="KW-0843">Virulence</keyword>
<sequence length="484" mass="52777">MNRIHSNSDSAAGVTALTHHHLSNVSCVSSGSLGKRQHRVNSTFGDGNAACLLSGKISLQEASNALKQLLDAVPGNHKRPSLPDFLQTNPAVLSMMMTSLILNVFGNNAQSLCQQLERATEVQNALRNKQVKEYQEQIQKAIEQEDKARKAGIFGAIFDWITGIFETVIGALKVVEGFLSGNPAEMASGVAYMAAGCAGMVKAGAETAMMCGADHDTCQAIIDVTSKIQFGCEAVALALDVFQIGRAFMATRGLSGAAAKVLDSGFGEEVVERMVGAGEAEIEELAEKFGEEVSESFSKQFEPLEREMAMANEMAEEAAEFSRNVENNMTRSAGKSFTKEGVKAMAKEAAKEALEKCVQEGGKFLLKKFRNKVLFNMFKKILYALLRDCSFKGLQAIRCATEGASQMNTGMVNTEKAKIEKKIEQLITQQRFLDFIMQQTENQKKIEQKRLEELYKGSGAALRDVLDTIDHYSSVQARIAGYRA</sequence>
<dbReference type="EMBL" id="AJ224892">
    <property type="protein sequence ID" value="CAA12187.1"/>
    <property type="molecule type" value="Genomic_DNA"/>
</dbReference>
<dbReference type="EMBL" id="AF020808">
    <property type="protein sequence ID" value="AAC28881.1"/>
    <property type="molecule type" value="Genomic_DNA"/>
</dbReference>
<dbReference type="EMBL" id="AE006468">
    <property type="protein sequence ID" value="AAL20324.1"/>
    <property type="molecule type" value="Genomic_DNA"/>
</dbReference>
<dbReference type="EMBL" id="DQ320510">
    <property type="protein sequence ID" value="ABC59204.1"/>
    <property type="molecule type" value="Genomic_DNA"/>
</dbReference>
<dbReference type="RefSeq" id="NP_460365.1">
    <property type="nucleotide sequence ID" value="NC_003197.2"/>
</dbReference>
<dbReference type="RefSeq" id="WP_001079760.1">
    <property type="nucleotide sequence ID" value="NC_003197.2"/>
</dbReference>
<dbReference type="SMR" id="O84947"/>
<dbReference type="STRING" id="99287.STM1400"/>
<dbReference type="TCDB" id="1.C.36.5.1">
    <property type="family name" value="the bacterial type iii-target cell pore (iiitcp) family"/>
</dbReference>
<dbReference type="PaxDb" id="99287-STM1400"/>
<dbReference type="GeneID" id="1252918"/>
<dbReference type="KEGG" id="stm:STM1400"/>
<dbReference type="PATRIC" id="fig|99287.12.peg.1484"/>
<dbReference type="HOGENOM" id="CLU_042650_0_0_6"/>
<dbReference type="OMA" id="DIERTPM"/>
<dbReference type="BioCyc" id="SENT99287:STM1400-MONOMER"/>
<dbReference type="Proteomes" id="UP000001014">
    <property type="component" value="Chromosome"/>
</dbReference>
<dbReference type="GO" id="GO:0009986">
    <property type="term" value="C:cell surface"/>
    <property type="evidence" value="ECO:0000314"/>
    <property type="project" value="UniProtKB"/>
</dbReference>
<dbReference type="GO" id="GO:0005737">
    <property type="term" value="C:cytoplasm"/>
    <property type="evidence" value="ECO:0000314"/>
    <property type="project" value="AgBase"/>
</dbReference>
<dbReference type="GO" id="GO:0005576">
    <property type="term" value="C:extracellular region"/>
    <property type="evidence" value="ECO:0000314"/>
    <property type="project" value="AgBase"/>
</dbReference>
<dbReference type="GO" id="GO:0033644">
    <property type="term" value="C:host cell membrane"/>
    <property type="evidence" value="ECO:0007669"/>
    <property type="project" value="UniProtKB-SubCell"/>
</dbReference>
<dbReference type="GO" id="GO:0016020">
    <property type="term" value="C:membrane"/>
    <property type="evidence" value="ECO:0007669"/>
    <property type="project" value="UniProtKB-KW"/>
</dbReference>
<dbReference type="GO" id="GO:0051087">
    <property type="term" value="F:protein-folding chaperone binding"/>
    <property type="evidence" value="ECO:0000353"/>
    <property type="project" value="AgBase"/>
</dbReference>
<dbReference type="GO" id="GO:0030254">
    <property type="term" value="P:protein secretion by the type III secretion system"/>
    <property type="evidence" value="ECO:0000314"/>
    <property type="project" value="UniProtKB"/>
</dbReference>
<dbReference type="InterPro" id="IPR006972">
    <property type="entry name" value="BipB-like_C"/>
</dbReference>
<dbReference type="NCBIfam" id="NF011889">
    <property type="entry name" value="PRK15362.1"/>
    <property type="match status" value="1"/>
</dbReference>
<dbReference type="Pfam" id="PF04888">
    <property type="entry name" value="SseC"/>
    <property type="match status" value="1"/>
</dbReference>